<keyword id="KW-0963">Cytoplasm</keyword>
<keyword id="KW-0251">Elongation factor</keyword>
<keyword id="KW-0342">GTP-binding</keyword>
<keyword id="KW-0547">Nucleotide-binding</keyword>
<keyword id="KW-0648">Protein biosynthesis</keyword>
<dbReference type="EMBL" id="CP001215">
    <property type="protein sequence ID" value="ACP14074.1"/>
    <property type="molecule type" value="Genomic_DNA"/>
</dbReference>
<dbReference type="RefSeq" id="WP_000090363.1">
    <property type="nucleotide sequence ID" value="NC_012581.1"/>
</dbReference>
<dbReference type="SMR" id="C3LJ79"/>
<dbReference type="KEGG" id="bah:BAMEG_0123"/>
<dbReference type="HOGENOM" id="CLU_002794_4_1_9"/>
<dbReference type="GO" id="GO:0005737">
    <property type="term" value="C:cytoplasm"/>
    <property type="evidence" value="ECO:0007669"/>
    <property type="project" value="UniProtKB-SubCell"/>
</dbReference>
<dbReference type="GO" id="GO:0005525">
    <property type="term" value="F:GTP binding"/>
    <property type="evidence" value="ECO:0007669"/>
    <property type="project" value="UniProtKB-UniRule"/>
</dbReference>
<dbReference type="GO" id="GO:0003924">
    <property type="term" value="F:GTPase activity"/>
    <property type="evidence" value="ECO:0007669"/>
    <property type="project" value="InterPro"/>
</dbReference>
<dbReference type="GO" id="GO:0003746">
    <property type="term" value="F:translation elongation factor activity"/>
    <property type="evidence" value="ECO:0007669"/>
    <property type="project" value="UniProtKB-UniRule"/>
</dbReference>
<dbReference type="GO" id="GO:0032790">
    <property type="term" value="P:ribosome disassembly"/>
    <property type="evidence" value="ECO:0007669"/>
    <property type="project" value="TreeGrafter"/>
</dbReference>
<dbReference type="CDD" id="cd01886">
    <property type="entry name" value="EF-G"/>
    <property type="match status" value="1"/>
</dbReference>
<dbReference type="CDD" id="cd16262">
    <property type="entry name" value="EFG_III"/>
    <property type="match status" value="1"/>
</dbReference>
<dbReference type="CDD" id="cd01434">
    <property type="entry name" value="EFG_mtEFG1_IV"/>
    <property type="match status" value="1"/>
</dbReference>
<dbReference type="CDD" id="cd03713">
    <property type="entry name" value="EFG_mtEFG_C"/>
    <property type="match status" value="1"/>
</dbReference>
<dbReference type="CDD" id="cd04088">
    <property type="entry name" value="EFG_mtEFG_II"/>
    <property type="match status" value="1"/>
</dbReference>
<dbReference type="FunFam" id="2.40.30.10:FF:000006">
    <property type="entry name" value="Elongation factor G"/>
    <property type="match status" value="1"/>
</dbReference>
<dbReference type="FunFam" id="3.30.230.10:FF:000003">
    <property type="entry name" value="Elongation factor G"/>
    <property type="match status" value="1"/>
</dbReference>
<dbReference type="FunFam" id="3.30.70.240:FF:000001">
    <property type="entry name" value="Elongation factor G"/>
    <property type="match status" value="1"/>
</dbReference>
<dbReference type="FunFam" id="3.30.70.870:FF:000001">
    <property type="entry name" value="Elongation factor G"/>
    <property type="match status" value="1"/>
</dbReference>
<dbReference type="FunFam" id="3.40.50.300:FF:000029">
    <property type="entry name" value="Elongation factor G"/>
    <property type="match status" value="1"/>
</dbReference>
<dbReference type="Gene3D" id="3.30.230.10">
    <property type="match status" value="1"/>
</dbReference>
<dbReference type="Gene3D" id="3.30.70.240">
    <property type="match status" value="1"/>
</dbReference>
<dbReference type="Gene3D" id="3.30.70.870">
    <property type="entry name" value="Elongation Factor G (Translational Gtpase), domain 3"/>
    <property type="match status" value="1"/>
</dbReference>
<dbReference type="Gene3D" id="3.40.50.300">
    <property type="entry name" value="P-loop containing nucleotide triphosphate hydrolases"/>
    <property type="match status" value="1"/>
</dbReference>
<dbReference type="Gene3D" id="2.40.30.10">
    <property type="entry name" value="Translation factors"/>
    <property type="match status" value="1"/>
</dbReference>
<dbReference type="HAMAP" id="MF_00054_B">
    <property type="entry name" value="EF_G_EF_2_B"/>
    <property type="match status" value="1"/>
</dbReference>
<dbReference type="InterPro" id="IPR041095">
    <property type="entry name" value="EFG_II"/>
</dbReference>
<dbReference type="InterPro" id="IPR009022">
    <property type="entry name" value="EFG_III"/>
</dbReference>
<dbReference type="InterPro" id="IPR035647">
    <property type="entry name" value="EFG_III/V"/>
</dbReference>
<dbReference type="InterPro" id="IPR047872">
    <property type="entry name" value="EFG_IV"/>
</dbReference>
<dbReference type="InterPro" id="IPR035649">
    <property type="entry name" value="EFG_V"/>
</dbReference>
<dbReference type="InterPro" id="IPR000640">
    <property type="entry name" value="EFG_V-like"/>
</dbReference>
<dbReference type="InterPro" id="IPR004161">
    <property type="entry name" value="EFTu-like_2"/>
</dbReference>
<dbReference type="InterPro" id="IPR031157">
    <property type="entry name" value="G_TR_CS"/>
</dbReference>
<dbReference type="InterPro" id="IPR027417">
    <property type="entry name" value="P-loop_NTPase"/>
</dbReference>
<dbReference type="InterPro" id="IPR020568">
    <property type="entry name" value="Ribosomal_Su5_D2-typ_SF"/>
</dbReference>
<dbReference type="InterPro" id="IPR014721">
    <property type="entry name" value="Ribsml_uS5_D2-typ_fold_subgr"/>
</dbReference>
<dbReference type="InterPro" id="IPR005225">
    <property type="entry name" value="Small_GTP-bd"/>
</dbReference>
<dbReference type="InterPro" id="IPR000795">
    <property type="entry name" value="T_Tr_GTP-bd_dom"/>
</dbReference>
<dbReference type="InterPro" id="IPR009000">
    <property type="entry name" value="Transl_B-barrel_sf"/>
</dbReference>
<dbReference type="InterPro" id="IPR004540">
    <property type="entry name" value="Transl_elong_EFG/EF2"/>
</dbReference>
<dbReference type="InterPro" id="IPR005517">
    <property type="entry name" value="Transl_elong_EFG/EF2_IV"/>
</dbReference>
<dbReference type="NCBIfam" id="TIGR00484">
    <property type="entry name" value="EF-G"/>
    <property type="match status" value="1"/>
</dbReference>
<dbReference type="NCBIfam" id="NF009379">
    <property type="entry name" value="PRK12740.1-3"/>
    <property type="match status" value="1"/>
</dbReference>
<dbReference type="NCBIfam" id="NF009381">
    <property type="entry name" value="PRK12740.1-5"/>
    <property type="match status" value="1"/>
</dbReference>
<dbReference type="NCBIfam" id="NF009891">
    <property type="entry name" value="PRK13351.1-1"/>
    <property type="match status" value="1"/>
</dbReference>
<dbReference type="NCBIfam" id="TIGR00231">
    <property type="entry name" value="small_GTP"/>
    <property type="match status" value="1"/>
</dbReference>
<dbReference type="PANTHER" id="PTHR43261:SF1">
    <property type="entry name" value="RIBOSOME-RELEASING FACTOR 2, MITOCHONDRIAL"/>
    <property type="match status" value="1"/>
</dbReference>
<dbReference type="PANTHER" id="PTHR43261">
    <property type="entry name" value="TRANSLATION ELONGATION FACTOR G-RELATED"/>
    <property type="match status" value="1"/>
</dbReference>
<dbReference type="Pfam" id="PF00679">
    <property type="entry name" value="EFG_C"/>
    <property type="match status" value="1"/>
</dbReference>
<dbReference type="Pfam" id="PF14492">
    <property type="entry name" value="EFG_III"/>
    <property type="match status" value="1"/>
</dbReference>
<dbReference type="Pfam" id="PF03764">
    <property type="entry name" value="EFG_IV"/>
    <property type="match status" value="1"/>
</dbReference>
<dbReference type="Pfam" id="PF00009">
    <property type="entry name" value="GTP_EFTU"/>
    <property type="match status" value="1"/>
</dbReference>
<dbReference type="Pfam" id="PF03144">
    <property type="entry name" value="GTP_EFTU_D2"/>
    <property type="match status" value="1"/>
</dbReference>
<dbReference type="PRINTS" id="PR00315">
    <property type="entry name" value="ELONGATNFCT"/>
</dbReference>
<dbReference type="SMART" id="SM00838">
    <property type="entry name" value="EFG_C"/>
    <property type="match status" value="1"/>
</dbReference>
<dbReference type="SMART" id="SM00889">
    <property type="entry name" value="EFG_IV"/>
    <property type="match status" value="1"/>
</dbReference>
<dbReference type="SUPFAM" id="SSF54980">
    <property type="entry name" value="EF-G C-terminal domain-like"/>
    <property type="match status" value="2"/>
</dbReference>
<dbReference type="SUPFAM" id="SSF52540">
    <property type="entry name" value="P-loop containing nucleoside triphosphate hydrolases"/>
    <property type="match status" value="1"/>
</dbReference>
<dbReference type="SUPFAM" id="SSF54211">
    <property type="entry name" value="Ribosomal protein S5 domain 2-like"/>
    <property type="match status" value="1"/>
</dbReference>
<dbReference type="SUPFAM" id="SSF50447">
    <property type="entry name" value="Translation proteins"/>
    <property type="match status" value="1"/>
</dbReference>
<dbReference type="PROSITE" id="PS00301">
    <property type="entry name" value="G_TR_1"/>
    <property type="match status" value="1"/>
</dbReference>
<dbReference type="PROSITE" id="PS51722">
    <property type="entry name" value="G_TR_2"/>
    <property type="match status" value="1"/>
</dbReference>
<evidence type="ECO:0000255" key="1">
    <source>
        <dbReference type="HAMAP-Rule" id="MF_00054"/>
    </source>
</evidence>
<organism>
    <name type="scientific">Bacillus anthracis (strain CDC 684 / NRRL 3495)</name>
    <dbReference type="NCBI Taxonomy" id="568206"/>
    <lineage>
        <taxon>Bacteria</taxon>
        <taxon>Bacillati</taxon>
        <taxon>Bacillota</taxon>
        <taxon>Bacilli</taxon>
        <taxon>Bacillales</taxon>
        <taxon>Bacillaceae</taxon>
        <taxon>Bacillus</taxon>
        <taxon>Bacillus cereus group</taxon>
    </lineage>
</organism>
<gene>
    <name evidence="1" type="primary">fusA</name>
    <name type="ordered locus">BAMEG_0123</name>
</gene>
<comment type="function">
    <text evidence="1">Catalyzes the GTP-dependent ribosomal translocation step during translation elongation. During this step, the ribosome changes from the pre-translocational (PRE) to the post-translocational (POST) state as the newly formed A-site-bound peptidyl-tRNA and P-site-bound deacylated tRNA move to the P and E sites, respectively. Catalyzes the coordinated movement of the two tRNA molecules, the mRNA and conformational changes in the ribosome.</text>
</comment>
<comment type="subcellular location">
    <subcellularLocation>
        <location evidence="1">Cytoplasm</location>
    </subcellularLocation>
</comment>
<comment type="similarity">
    <text evidence="1">Belongs to the TRAFAC class translation factor GTPase superfamily. Classic translation factor GTPase family. EF-G/EF-2 subfamily.</text>
</comment>
<reference key="1">
    <citation type="submission" date="2008-10" db="EMBL/GenBank/DDBJ databases">
        <title>Genome sequence of Bacillus anthracis str. CDC 684.</title>
        <authorList>
            <person name="Dodson R.J."/>
            <person name="Munk A.C."/>
            <person name="Brettin T."/>
            <person name="Bruce D."/>
            <person name="Detter C."/>
            <person name="Tapia R."/>
            <person name="Han C."/>
            <person name="Sutton G."/>
            <person name="Sims D."/>
        </authorList>
    </citation>
    <scope>NUCLEOTIDE SEQUENCE [LARGE SCALE GENOMIC DNA]</scope>
    <source>
        <strain>CDC 684 / NRRL 3495</strain>
    </source>
</reference>
<feature type="chain" id="PRO_1000201433" description="Elongation factor G">
    <location>
        <begin position="1"/>
        <end position="692"/>
    </location>
</feature>
<feature type="domain" description="tr-type G">
    <location>
        <begin position="8"/>
        <end position="282"/>
    </location>
</feature>
<feature type="binding site" evidence="1">
    <location>
        <begin position="17"/>
        <end position="24"/>
    </location>
    <ligand>
        <name>GTP</name>
        <dbReference type="ChEBI" id="CHEBI:37565"/>
    </ligand>
</feature>
<feature type="binding site" evidence="1">
    <location>
        <begin position="81"/>
        <end position="85"/>
    </location>
    <ligand>
        <name>GTP</name>
        <dbReference type="ChEBI" id="CHEBI:37565"/>
    </ligand>
</feature>
<feature type="binding site" evidence="1">
    <location>
        <begin position="135"/>
        <end position="138"/>
    </location>
    <ligand>
        <name>GTP</name>
        <dbReference type="ChEBI" id="CHEBI:37565"/>
    </ligand>
</feature>
<sequence>MAREFSLENTRNIGIMAHIDAGKTTATERILYYTGRIHKIGETHEGASQMDWMEQEQERGITITSAATTAQWKGHRVNIIDTPGHVDFTVEVERSLRVLDGAVAVLDAQSGVEPQTETVWRQATTYGVPRIVFVNKMDKIGADFLYSVGTIHDRLQANAHPIQLPIGAEDEFNGIIDLVEECAYMYGNDLGTDIQRVEIPEEHKELAEEYRGKLIEAVAELDEEMMMKYLEGEEITVEELKAGIRKATTSVEFFPVICGSAFKNKGVQILLDAVIDYLPSPLDVPAIKGIVPDTDEEVERKSSDEEPFAALAFKIMTDPYVGKLTFFRVYSGVLNSGSYVKNSTKGKRERVGRILQMHANSREEISTVYAGDIAAAVGLKDTTTGDTLCDEKSLVILESMEFPEPVISVAIEPKSKADQDKMGTALSKLSEEDPTFRAHTDQETGQTIIAGMGELHLDIIVDRMRREFKVEANVGAPQVAYRETFRAAAKVEGKFARQSGGRGQFGHVWIEFEPNEEGKGFEFENKIVGGVVPREYIPAVGAGLEDALKNGVLAGYPVADIKAALVDGSYHDVDSSEMAFKIAASMALKAAVSKCNPVILEPMMKVEVVIPEEYMGDIMGDVTSRRGRVEGMEARGNAQVVRAMVPLSEMFGYATSLRSNTQGRGTFSMVFDHYEEVPKSVSEEIIKKNKGE</sequence>
<name>EFG_BACAC</name>
<proteinExistence type="inferred from homology"/>
<accession>C3LJ79</accession>
<protein>
    <recommendedName>
        <fullName evidence="1">Elongation factor G</fullName>
        <shortName evidence="1">EF-G</shortName>
    </recommendedName>
</protein>